<proteinExistence type="inferred from homology"/>
<feature type="chain" id="PRO_1000087981" description="Rhomboid protease GlpG">
    <location>
        <begin position="1"/>
        <end position="276"/>
    </location>
</feature>
<feature type="transmembrane region" description="Helical" evidence="1">
    <location>
        <begin position="94"/>
        <end position="114"/>
    </location>
</feature>
<feature type="transmembrane region" description="Helical" evidence="1">
    <location>
        <begin position="142"/>
        <end position="162"/>
    </location>
</feature>
<feature type="transmembrane region" description="Helical" evidence="1">
    <location>
        <begin position="169"/>
        <end position="189"/>
    </location>
</feature>
<feature type="transmembrane region" description="Helical" evidence="1">
    <location>
        <begin position="192"/>
        <end position="212"/>
    </location>
</feature>
<feature type="transmembrane region" description="Helical" evidence="1">
    <location>
        <begin position="229"/>
        <end position="249"/>
    </location>
</feature>
<feature type="transmembrane region" description="Helical" evidence="1">
    <location>
        <begin position="250"/>
        <end position="270"/>
    </location>
</feature>
<feature type="active site" description="Nucleophile" evidence="1">
    <location>
        <position position="201"/>
    </location>
</feature>
<feature type="active site" evidence="1">
    <location>
        <position position="254"/>
    </location>
</feature>
<dbReference type="EC" id="3.4.21.105" evidence="1"/>
<dbReference type="EMBL" id="CP000946">
    <property type="protein sequence ID" value="ACA75968.1"/>
    <property type="molecule type" value="Genomic_DNA"/>
</dbReference>
<dbReference type="RefSeq" id="WP_000928723.1">
    <property type="nucleotide sequence ID" value="NZ_MTFT01000001.1"/>
</dbReference>
<dbReference type="BMRB" id="B1IP42"/>
<dbReference type="SMR" id="B1IP42"/>
<dbReference type="MEROPS" id="S54.016"/>
<dbReference type="GeneID" id="86862178"/>
<dbReference type="KEGG" id="ecl:EcolC_0290"/>
<dbReference type="HOGENOM" id="CLU_058989_0_0_6"/>
<dbReference type="GO" id="GO:0005886">
    <property type="term" value="C:plasma membrane"/>
    <property type="evidence" value="ECO:0007669"/>
    <property type="project" value="UniProtKB-SubCell"/>
</dbReference>
<dbReference type="GO" id="GO:0004252">
    <property type="term" value="F:serine-type endopeptidase activity"/>
    <property type="evidence" value="ECO:0007669"/>
    <property type="project" value="UniProtKB-UniRule"/>
</dbReference>
<dbReference type="GO" id="GO:0006508">
    <property type="term" value="P:proteolysis"/>
    <property type="evidence" value="ECO:0007669"/>
    <property type="project" value="UniProtKB-UniRule"/>
</dbReference>
<dbReference type="FunFam" id="1.20.1540.10:FF:000003">
    <property type="entry name" value="Rhomboid protease GlpG"/>
    <property type="match status" value="1"/>
</dbReference>
<dbReference type="FunFam" id="3.30.70.2350:FF:000001">
    <property type="entry name" value="Rhomboid protease GlpG"/>
    <property type="match status" value="1"/>
</dbReference>
<dbReference type="Gene3D" id="3.30.70.2350">
    <property type="match status" value="1"/>
</dbReference>
<dbReference type="Gene3D" id="1.20.1540.10">
    <property type="entry name" value="Rhomboid-like"/>
    <property type="match status" value="1"/>
</dbReference>
<dbReference type="HAMAP" id="MF_01594">
    <property type="entry name" value="Rhomboid_GlpG"/>
    <property type="match status" value="1"/>
</dbReference>
<dbReference type="InterPro" id="IPR038236">
    <property type="entry name" value="GlpG_N_sf"/>
</dbReference>
<dbReference type="InterPro" id="IPR022732">
    <property type="entry name" value="Peptidase_S54_GlpG_N"/>
</dbReference>
<dbReference type="InterPro" id="IPR022764">
    <property type="entry name" value="Peptidase_S54_rhomboid_dom"/>
</dbReference>
<dbReference type="InterPro" id="IPR035952">
    <property type="entry name" value="Rhomboid-like_sf"/>
</dbReference>
<dbReference type="InterPro" id="IPR023662">
    <property type="entry name" value="Rhomboid_protease_GlpG"/>
</dbReference>
<dbReference type="NCBIfam" id="NF008155">
    <property type="entry name" value="PRK10907.1"/>
    <property type="match status" value="1"/>
</dbReference>
<dbReference type="NCBIfam" id="TIGR04239">
    <property type="entry name" value="rhombo_GlpG"/>
    <property type="match status" value="1"/>
</dbReference>
<dbReference type="PANTHER" id="PTHR43066:SF26">
    <property type="entry name" value="RHOMBOID PROTEASE GLPG"/>
    <property type="match status" value="1"/>
</dbReference>
<dbReference type="PANTHER" id="PTHR43066">
    <property type="entry name" value="RHOMBOID-RELATED PROTEIN"/>
    <property type="match status" value="1"/>
</dbReference>
<dbReference type="Pfam" id="PF01694">
    <property type="entry name" value="Rhomboid"/>
    <property type="match status" value="1"/>
</dbReference>
<dbReference type="Pfam" id="PF12122">
    <property type="entry name" value="Rhomboid_N"/>
    <property type="match status" value="1"/>
</dbReference>
<dbReference type="SUPFAM" id="SSF144091">
    <property type="entry name" value="Rhomboid-like"/>
    <property type="match status" value="1"/>
</dbReference>
<protein>
    <recommendedName>
        <fullName evidence="1">Rhomboid protease GlpG</fullName>
        <ecNumber evidence="1">3.4.21.105</ecNumber>
    </recommendedName>
    <alternativeName>
        <fullName evidence="1">Intramembrane serine protease</fullName>
    </alternativeName>
</protein>
<organism>
    <name type="scientific">Escherichia coli (strain ATCC 8739 / DSM 1576 / NBRC 3972 / NCIMB 8545 / WDCM 00012 / Crooks)</name>
    <dbReference type="NCBI Taxonomy" id="481805"/>
    <lineage>
        <taxon>Bacteria</taxon>
        <taxon>Pseudomonadati</taxon>
        <taxon>Pseudomonadota</taxon>
        <taxon>Gammaproteobacteria</taxon>
        <taxon>Enterobacterales</taxon>
        <taxon>Enterobacteriaceae</taxon>
        <taxon>Escherichia</taxon>
    </lineage>
</organism>
<name>GLPG_ECOLC</name>
<keyword id="KW-0997">Cell inner membrane</keyword>
<keyword id="KW-1003">Cell membrane</keyword>
<keyword id="KW-0378">Hydrolase</keyword>
<keyword id="KW-0472">Membrane</keyword>
<keyword id="KW-0645">Protease</keyword>
<keyword id="KW-0720">Serine protease</keyword>
<keyword id="KW-0812">Transmembrane</keyword>
<keyword id="KW-1133">Transmembrane helix</keyword>
<evidence type="ECO:0000255" key="1">
    <source>
        <dbReference type="HAMAP-Rule" id="MF_01594"/>
    </source>
</evidence>
<comment type="function">
    <text evidence="1">Rhomboid-type serine protease that catalyzes intramembrane proteolysis.</text>
</comment>
<comment type="catalytic activity">
    <reaction evidence="1">
        <text>Cleaves type-1 transmembrane domains using a catalytic dyad composed of serine and histidine that are contributed by different transmembrane domains.</text>
        <dbReference type="EC" id="3.4.21.105"/>
    </reaction>
</comment>
<comment type="subcellular location">
    <subcellularLocation>
        <location evidence="1">Cell inner membrane</location>
        <topology evidence="1">Multi-pass membrane protein</topology>
    </subcellularLocation>
</comment>
<comment type="similarity">
    <text evidence="1">Belongs to the peptidase S54 family.</text>
</comment>
<reference key="1">
    <citation type="submission" date="2008-02" db="EMBL/GenBank/DDBJ databases">
        <title>Complete sequence of Escherichia coli C str. ATCC 8739.</title>
        <authorList>
            <person name="Copeland A."/>
            <person name="Lucas S."/>
            <person name="Lapidus A."/>
            <person name="Glavina del Rio T."/>
            <person name="Dalin E."/>
            <person name="Tice H."/>
            <person name="Bruce D."/>
            <person name="Goodwin L."/>
            <person name="Pitluck S."/>
            <person name="Kiss H."/>
            <person name="Brettin T."/>
            <person name="Detter J.C."/>
            <person name="Han C."/>
            <person name="Kuske C.R."/>
            <person name="Schmutz J."/>
            <person name="Larimer F."/>
            <person name="Land M."/>
            <person name="Hauser L."/>
            <person name="Kyrpides N."/>
            <person name="Mikhailova N."/>
            <person name="Ingram L."/>
            <person name="Richardson P."/>
        </authorList>
    </citation>
    <scope>NUCLEOTIDE SEQUENCE [LARGE SCALE GENOMIC DNA]</scope>
    <source>
        <strain>ATCC 8739 / DSM 1576 / NBRC 3972 / NCIMB 8545 / WDCM 00012 / Crooks</strain>
    </source>
</reference>
<gene>
    <name evidence="1" type="primary">glpG</name>
    <name type="ordered locus">EcolC_0290</name>
</gene>
<accession>B1IP42</accession>
<sequence length="276" mass="31307">MLMITSFANPRVAQAFVDYMATQGVILTIQQHNQSDVWLADESQAERVRAELARFLENPADPRYLAASWQAGHTGSGLHYRRYPFFAALRERAGPVTWVMMIACVVVFIAMQILGDQEVMLWLAWPFDPTLKFEFWRYFTHALMHFSLMHILFNLLWWWYLGGAVEKRLGSGKLIVITLISALLSGYVQQKFSGPWFGGLSGVVYALMGYVWLRGERDPQSGIYLQRGLIIFALIWIVAGWFDLFGMSMANGAHIAGLAVGLAMAFVDSLNARKRK</sequence>